<evidence type="ECO:0000250" key="1">
    <source>
        <dbReference type="UniProtKB" id="A0A1Q3EPD6"/>
    </source>
</evidence>
<evidence type="ECO:0000250" key="2">
    <source>
        <dbReference type="UniProtKB" id="A0A2R2JFI5"/>
    </source>
</evidence>
<evidence type="ECO:0000269" key="3">
    <source>
    </source>
</evidence>
<evidence type="ECO:0000303" key="4">
    <source>
    </source>
</evidence>
<evidence type="ECO:0000305" key="5"/>
<evidence type="ECO:0000305" key="6">
    <source>
    </source>
</evidence>
<organism>
    <name type="scientific">Cerrena unicolor</name>
    <name type="common">Canker rot fungus</name>
    <name type="synonym">Daedalea unicolor</name>
    <dbReference type="NCBI Taxonomy" id="90312"/>
    <lineage>
        <taxon>Eukaryota</taxon>
        <taxon>Fungi</taxon>
        <taxon>Dikarya</taxon>
        <taxon>Basidiomycota</taxon>
        <taxon>Agaricomycotina</taxon>
        <taxon>Agaricomycetes</taxon>
        <taxon>Polyporales</taxon>
        <taxon>Cerrenaceae</taxon>
        <taxon>Cerrena</taxon>
    </lineage>
</organism>
<feature type="chain" id="PRO_0000458504" description="N-methyltranferase ceuM2" evidence="6">
    <location>
        <begin position="1"/>
        <end position="393"/>
    </location>
</feature>
<feature type="peptide" id="PRO_0000458505" description="Ribosomally synthesized type I borosin core peptide" evidence="6">
    <location>
        <begin position="394"/>
        <end position="407"/>
    </location>
</feature>
<feature type="region of interest" description="Methyltransferase domain" evidence="2">
    <location>
        <begin position="1"/>
        <end position="246"/>
    </location>
</feature>
<feature type="region of interest" description="Clasp domain" evidence="2">
    <location>
        <begin position="247"/>
        <end position="370"/>
    </location>
</feature>
<feature type="region of interest" description="Precursor leader" evidence="2">
    <location>
        <begin position="371"/>
        <end position="393"/>
    </location>
</feature>
<feature type="active site" evidence="2">
    <location>
        <position position="70"/>
    </location>
</feature>
<feature type="active site" evidence="2">
    <location>
        <position position="74"/>
    </location>
</feature>
<feature type="active site" evidence="2">
    <location>
        <position position="96"/>
    </location>
</feature>
<feature type="binding site" evidence="2">
    <location>
        <position position="96"/>
    </location>
    <ligand>
        <name>S-adenosyl-L-methionine</name>
        <dbReference type="ChEBI" id="CHEBI:59789"/>
    </ligand>
</feature>
<feature type="binding site" evidence="2">
    <location>
        <position position="98"/>
    </location>
    <ligand>
        <name>S-adenosyl-L-methionine</name>
        <dbReference type="ChEBI" id="CHEBI:59789"/>
    </ligand>
</feature>
<feature type="binding site" evidence="2">
    <location>
        <position position="101"/>
    </location>
    <ligand>
        <name>S-adenosyl-L-methionine</name>
        <dbReference type="ChEBI" id="CHEBI:59789"/>
    </ligand>
</feature>
<feature type="binding site" evidence="2">
    <location>
        <position position="128"/>
    </location>
    <ligand>
        <name>S-adenosyl-L-methionine</name>
        <dbReference type="ChEBI" id="CHEBI:59789"/>
    </ligand>
</feature>
<feature type="binding site" evidence="2">
    <location>
        <position position="170"/>
    </location>
    <ligand>
        <name>S-adenosyl-L-methionine</name>
        <dbReference type="ChEBI" id="CHEBI:59789"/>
    </ligand>
</feature>
<feature type="binding site" evidence="2">
    <location>
        <position position="208"/>
    </location>
    <ligand>
        <name>S-adenosyl-L-methionine</name>
        <dbReference type="ChEBI" id="CHEBI:59789"/>
    </ligand>
</feature>
<feature type="binding site" evidence="2">
    <location>
        <position position="239"/>
    </location>
    <ligand>
        <name>S-adenosyl-L-methionine</name>
        <dbReference type="ChEBI" id="CHEBI:59789"/>
    </ligand>
</feature>
<feature type="binding site" evidence="2">
    <location>
        <position position="240"/>
    </location>
    <ligand>
        <name>S-adenosyl-L-methionine</name>
        <dbReference type="ChEBI" id="CHEBI:59789"/>
    </ligand>
</feature>
<feature type="modified residue" description="N-methylthreonine" evidence="3">
    <location>
        <position position="399"/>
    </location>
</feature>
<feature type="modified residue" description="N-methylthreonine" evidence="3">
    <location>
        <position position="400"/>
    </location>
</feature>
<feature type="modified residue" description="N-methylisoleucine" evidence="3">
    <location>
        <position position="401"/>
    </location>
</feature>
<feature type="modified residue" description="N-methylvaline" evidence="3">
    <location>
        <position position="402"/>
    </location>
</feature>
<feature type="modified residue" description="N-methylvaline" evidence="3">
    <location>
        <position position="403"/>
    </location>
</feature>
<feature type="modified residue" description="N-methylisoleucine" evidence="3">
    <location>
        <position position="404"/>
    </location>
</feature>
<feature type="modified residue" description="N-methylvaline" evidence="3">
    <location>
        <position position="405"/>
    </location>
</feature>
<feature type="modified residue" description="N-methylhistidine" evidence="3">
    <location>
        <position position="406"/>
    </location>
</feature>
<comment type="function">
    <text evidence="2 3">Fusion protein of the methyltransferase ceuM2 and a type I borosin core peptide; part of the gene cluster that mediates the biosynthesis of a type I borosin, a highly methylated cyclic peptide with potent biological activities (PubMed:31117659). Type I borosins derive from the C-terminus of the fusion protein, and it is the same protein that methylates its own C-terminus using S-adenosyl methionine (SAM) (PubMed:31117659). The C-terminus is subsequently cleaved off and macrocyclized by a prolyloligopeptidase to give the final product (By similarity).</text>
</comment>
<comment type="pathway">
    <text evidence="6">Secondary metabolite biosynthesis.</text>
</comment>
<comment type="subunit">
    <text evidence="1">Homodimer.</text>
</comment>
<comment type="domain">
    <text evidence="6">Within the homodimer, the clasp domain wraps around the adjacent subunit to position the core peptide into the other subunit's active site for iterative intermolecular methylation.</text>
</comment>
<comment type="PTM">
    <text evidence="3 5">CeuMA2 automethylates at Thr-399, Thr-400, Ile-401, Val-402, Val-403, Ile-404, Val-405 and His-406 before being processed by a prolyloligopeptidase which likely forms a peptidyl ester upon removal of the follower propeptide, which then undergoes macrocyclization with the N-terminus of the modified core peptide (PubMed:31117659). Peptide backbone alpha-N-methylations change the physicochemical properties of amide bonds to provide structural constraints and other favorable characteristics including biological membrane permeability to peptides (Probable).</text>
</comment>
<comment type="similarity">
    <text evidence="5">In the N-terminal section; belongs to the precorrin methyltransferase family.</text>
</comment>
<reference key="1">
    <citation type="journal article" date="2019" name="J. Am. Chem. Soc.">
        <title>Distinct autocatalytic alpha-N-methylating precursors expand the borosin RiPP family of peptide natural products.</title>
        <authorList>
            <person name="Quijano M.R."/>
            <person name="Zach C."/>
            <person name="Miller F.S."/>
            <person name="Lee A.R."/>
            <person name="Imani A.S."/>
            <person name="Kuenzler M."/>
            <person name="Freeman M.F."/>
        </authorList>
    </citation>
    <scope>FUNCTION</scope>
    <scope>CATALYTIC ACTIVITY</scope>
    <scope>DOMAIN</scope>
    <scope>METHYLATION AT THR-399; THR-400; ILE-401; VAL-402; VAL-403; ILE-404; VAL-405 AND HIS-406</scope>
</reference>
<proteinExistence type="evidence at protein level"/>
<accession>P9WEN3</accession>
<name>CEUM2_CERUI</name>
<dbReference type="EC" id="2.1.1.-" evidence="3"/>
<dbReference type="SMR" id="P9WEN3"/>
<dbReference type="iPTMnet" id="P9WEN3"/>
<dbReference type="GO" id="GO:0008168">
    <property type="term" value="F:methyltransferase activity"/>
    <property type="evidence" value="ECO:0007669"/>
    <property type="project" value="UniProtKB-KW"/>
</dbReference>
<dbReference type="GO" id="GO:0032259">
    <property type="term" value="P:methylation"/>
    <property type="evidence" value="ECO:0007669"/>
    <property type="project" value="UniProtKB-KW"/>
</dbReference>
<dbReference type="CDD" id="cd19916">
    <property type="entry name" value="OphMA_like"/>
    <property type="match status" value="1"/>
</dbReference>
<dbReference type="Gene3D" id="3.40.1010.10">
    <property type="entry name" value="Cobalt-precorrin-4 Transmethylase, Domain 1"/>
    <property type="match status" value="1"/>
</dbReference>
<dbReference type="InterPro" id="IPR000878">
    <property type="entry name" value="4pyrrol_Mease"/>
</dbReference>
<dbReference type="InterPro" id="IPR035996">
    <property type="entry name" value="4pyrrol_Methylase_sf"/>
</dbReference>
<dbReference type="InterPro" id="IPR014777">
    <property type="entry name" value="4pyrrole_Mease_sub1"/>
</dbReference>
<dbReference type="Pfam" id="PF00590">
    <property type="entry name" value="TP_methylase"/>
    <property type="match status" value="1"/>
</dbReference>
<dbReference type="SUPFAM" id="SSF53790">
    <property type="entry name" value="Tetrapyrrole methylase"/>
    <property type="match status" value="1"/>
</dbReference>
<sequence length="407" mass="44919">MATTKTGSLTIAGSGIASVAHITLEVLSYLQEADKIYYAIVDPVTEAFIQDKSKGRCFDLRVYYDKDKMRSETYVQMSEVMLRDVRSGYNVLAIFYGHPGVFVCPTHRAISIARSEGYTAKMLPGVSAEDYMFSDIGFDPAVPGCMTQEATSLLIYNKQLDPSVHNIIWQVGSVGVDNMVFDNKQFHLLVDHLERDFGSIHKVIHYVGAIMPQSATVMDEYTISDLRKEDVVKKFTTTSTLYIPPREIAPVDQRIMQALEFSGNGDRYMALSQLRGVHARNSGLCAYGPAEQAAVDKLDHHTPPDDYEVLRASPAIRRFTEDLALKPDLRSRYKEDPLSVLDAIPGLTSQEKFALSFDKPGPVYKVMRATPAAIAAGQEHSLDEIAGSADSESPGALATTIVVIVHI</sequence>
<protein>
    <recommendedName>
        <fullName evidence="4">Methyltransferase/ribosomally synthesized type I borosin cyclic peptide precursor ceuMA2</fullName>
    </recommendedName>
    <alternativeName>
        <fullName evidence="4">Type I borosin cyclic peptide biosynthesis cluster protein MA2</fullName>
    </alternativeName>
    <component>
        <recommendedName>
            <fullName evidence="4">N-methyltranferase ceuM2</fullName>
            <ecNumber evidence="3">2.1.1.-</ecNumber>
        </recommendedName>
    </component>
    <component>
        <recommendedName>
            <fullName evidence="4">Ribosomally synthesized type I borosin core peptide</fullName>
        </recommendedName>
    </component>
</protein>
<keyword id="KW-0488">Methylation</keyword>
<keyword id="KW-0489">Methyltransferase</keyword>
<keyword id="KW-0949">S-adenosyl-L-methionine</keyword>
<keyword id="KW-0808">Transferase</keyword>